<dbReference type="EC" id="4.3.1.3" evidence="1"/>
<dbReference type="EMBL" id="CP001186">
    <property type="protein sequence ID" value="ACK93309.1"/>
    <property type="molecule type" value="Genomic_DNA"/>
</dbReference>
<dbReference type="RefSeq" id="WP_000631844.1">
    <property type="nucleotide sequence ID" value="NC_011772.1"/>
</dbReference>
<dbReference type="SMR" id="B7ISJ2"/>
<dbReference type="KEGG" id="bcg:BCG9842_B1556"/>
<dbReference type="HOGENOM" id="CLU_014801_4_0_9"/>
<dbReference type="UniPathway" id="UPA00379">
    <property type="reaction ID" value="UER00549"/>
</dbReference>
<dbReference type="Proteomes" id="UP000006744">
    <property type="component" value="Chromosome"/>
</dbReference>
<dbReference type="GO" id="GO:0005737">
    <property type="term" value="C:cytoplasm"/>
    <property type="evidence" value="ECO:0007669"/>
    <property type="project" value="UniProtKB-SubCell"/>
</dbReference>
<dbReference type="GO" id="GO:0004397">
    <property type="term" value="F:histidine ammonia-lyase activity"/>
    <property type="evidence" value="ECO:0007669"/>
    <property type="project" value="UniProtKB-UniRule"/>
</dbReference>
<dbReference type="GO" id="GO:0019556">
    <property type="term" value="P:L-histidine catabolic process to glutamate and formamide"/>
    <property type="evidence" value="ECO:0007669"/>
    <property type="project" value="UniProtKB-UniPathway"/>
</dbReference>
<dbReference type="GO" id="GO:0019557">
    <property type="term" value="P:L-histidine catabolic process to glutamate and formate"/>
    <property type="evidence" value="ECO:0007669"/>
    <property type="project" value="UniProtKB-UniPathway"/>
</dbReference>
<dbReference type="CDD" id="cd00332">
    <property type="entry name" value="PAL-HAL"/>
    <property type="match status" value="1"/>
</dbReference>
<dbReference type="FunFam" id="1.10.275.10:FF:000008">
    <property type="entry name" value="Histidine ammonia-lyase"/>
    <property type="match status" value="1"/>
</dbReference>
<dbReference type="FunFam" id="1.20.200.10:FF:000003">
    <property type="entry name" value="Histidine ammonia-lyase"/>
    <property type="match status" value="1"/>
</dbReference>
<dbReference type="Gene3D" id="1.20.200.10">
    <property type="entry name" value="Fumarase/aspartase (Central domain)"/>
    <property type="match status" value="1"/>
</dbReference>
<dbReference type="Gene3D" id="1.10.275.10">
    <property type="entry name" value="Fumarase/aspartase (N-terminal domain)"/>
    <property type="match status" value="1"/>
</dbReference>
<dbReference type="HAMAP" id="MF_00229">
    <property type="entry name" value="His_ammonia_lyase"/>
    <property type="match status" value="1"/>
</dbReference>
<dbReference type="InterPro" id="IPR001106">
    <property type="entry name" value="Aromatic_Lyase"/>
</dbReference>
<dbReference type="InterPro" id="IPR024083">
    <property type="entry name" value="Fumarase/histidase_N"/>
</dbReference>
<dbReference type="InterPro" id="IPR005921">
    <property type="entry name" value="HutH"/>
</dbReference>
<dbReference type="InterPro" id="IPR008948">
    <property type="entry name" value="L-Aspartase-like"/>
</dbReference>
<dbReference type="InterPro" id="IPR022313">
    <property type="entry name" value="Phe/His_NH3-lyase_AS"/>
</dbReference>
<dbReference type="NCBIfam" id="TIGR01225">
    <property type="entry name" value="hutH"/>
    <property type="match status" value="1"/>
</dbReference>
<dbReference type="NCBIfam" id="NF006871">
    <property type="entry name" value="PRK09367.1"/>
    <property type="match status" value="1"/>
</dbReference>
<dbReference type="PANTHER" id="PTHR10362">
    <property type="entry name" value="HISTIDINE AMMONIA-LYASE"/>
    <property type="match status" value="1"/>
</dbReference>
<dbReference type="Pfam" id="PF00221">
    <property type="entry name" value="Lyase_aromatic"/>
    <property type="match status" value="1"/>
</dbReference>
<dbReference type="SUPFAM" id="SSF48557">
    <property type="entry name" value="L-aspartase-like"/>
    <property type="match status" value="1"/>
</dbReference>
<dbReference type="PROSITE" id="PS00488">
    <property type="entry name" value="PAL_HISTIDASE"/>
    <property type="match status" value="1"/>
</dbReference>
<gene>
    <name evidence="1" type="primary">hutH</name>
    <name type="ordered locus">BCG9842_B1556</name>
</gene>
<name>HUTH_BACC2</name>
<protein>
    <recommendedName>
        <fullName evidence="1">Histidine ammonia-lyase</fullName>
        <shortName evidence="1">Histidase</shortName>
        <ecNumber evidence="1">4.3.1.3</ecNumber>
    </recommendedName>
</protein>
<evidence type="ECO:0000255" key="1">
    <source>
        <dbReference type="HAMAP-Rule" id="MF_00229"/>
    </source>
</evidence>
<reference key="1">
    <citation type="submission" date="2008-10" db="EMBL/GenBank/DDBJ databases">
        <title>Genome sequence of Bacillus cereus G9842.</title>
        <authorList>
            <person name="Dodson R.J."/>
            <person name="Durkin A.S."/>
            <person name="Rosovitz M.J."/>
            <person name="Rasko D.A."/>
            <person name="Hoffmaster A."/>
            <person name="Ravel J."/>
            <person name="Sutton G."/>
        </authorList>
    </citation>
    <scope>NUCLEOTIDE SEQUENCE [LARGE SCALE GENOMIC DNA]</scope>
    <source>
        <strain>G9842</strain>
    </source>
</reference>
<organism>
    <name type="scientific">Bacillus cereus (strain G9842)</name>
    <dbReference type="NCBI Taxonomy" id="405531"/>
    <lineage>
        <taxon>Bacteria</taxon>
        <taxon>Bacillati</taxon>
        <taxon>Bacillota</taxon>
        <taxon>Bacilli</taxon>
        <taxon>Bacillales</taxon>
        <taxon>Bacillaceae</taxon>
        <taxon>Bacillus</taxon>
        <taxon>Bacillus cereus group</taxon>
    </lineage>
</organism>
<keyword id="KW-0963">Cytoplasm</keyword>
<keyword id="KW-0369">Histidine metabolism</keyword>
<keyword id="KW-0456">Lyase</keyword>
<comment type="catalytic activity">
    <reaction evidence="1">
        <text>L-histidine = trans-urocanate + NH4(+)</text>
        <dbReference type="Rhea" id="RHEA:21232"/>
        <dbReference type="ChEBI" id="CHEBI:17771"/>
        <dbReference type="ChEBI" id="CHEBI:28938"/>
        <dbReference type="ChEBI" id="CHEBI:57595"/>
        <dbReference type="EC" id="4.3.1.3"/>
    </reaction>
</comment>
<comment type="pathway">
    <text evidence="1">Amino-acid degradation; L-histidine degradation into L-glutamate; N-formimidoyl-L-glutamate from L-histidine: step 1/3.</text>
</comment>
<comment type="subcellular location">
    <subcellularLocation>
        <location evidence="1">Cytoplasm</location>
    </subcellularLocation>
</comment>
<comment type="PTM">
    <text evidence="1">Contains an active site 4-methylidene-imidazol-5-one (MIO), which is formed autocatalytically by cyclization and dehydration of residues Ala-Ser-Gly.</text>
</comment>
<comment type="similarity">
    <text evidence="1">Belongs to the PAL/histidase family.</text>
</comment>
<feature type="chain" id="PRO_1000190490" description="Histidine ammonia-lyase">
    <location>
        <begin position="1"/>
        <end position="505"/>
    </location>
</feature>
<feature type="modified residue" description="2,3-didehydroalanine (Ser)" evidence="1">
    <location>
        <position position="142"/>
    </location>
</feature>
<feature type="cross-link" description="5-imidazolinone (Ala-Gly)" evidence="1">
    <location>
        <begin position="141"/>
        <end position="143"/>
    </location>
</feature>
<accession>B7ISJ2</accession>
<proteinExistence type="inferred from homology"/>
<sequence length="505" mass="55327">MITLTGHTLTIEEMKRLLLEGEGVTACPTSMQKVAECREVVEKIVEDGKVVYGITTGFGKFSDVLIQKDDVKALQHNLIQSHACGIGDPFPEEVSRGMLILRANTMLKGVSGVRPLVVNMLLEFVNRKIHPVVPQQGSLGASGDLAPLSHLALVLLGEGEVFYKGKRVHAMVALTEEGLEPIELEAKEGLALINGTQAMTAQGVLSYIEAEATAYQAELIASMTIEGLQGIIDAFDENVHKARGYKEQVDVASRIRDILHDSKLTTKQGELRVQDAYSLRCIPQVHGASWQVLNYVKEKLEIEMNAATDNPLIFDGGEKVISGGNFHGQPIAFAMDFLKVGMAELANISERRIERLVNPQLNDLPPFLSPEPGLQSGAMIMQYAAASLVSENKTLAHPASVDSIPSSANQEDHVSMGTIASRHAHQIIQNARRVLSIEMICAMQAAEYRGIENMSTVTKSFYHQGRQQVPSITNDRIFSTDIENIAHWLKTNYSIKERLDVNAAL</sequence>